<name>RAGP2_ARATH</name>
<dbReference type="EMBL" id="AF214560">
    <property type="protein sequence ID" value="AAF25948.1"/>
    <property type="molecule type" value="mRNA"/>
</dbReference>
<dbReference type="EMBL" id="AF296837">
    <property type="status" value="NOT_ANNOTATED_CDS"/>
    <property type="molecule type" value="Genomic_DNA"/>
</dbReference>
<dbReference type="EMBL" id="CP002688">
    <property type="protein sequence ID" value="AED92685.1"/>
    <property type="molecule type" value="Genomic_DNA"/>
</dbReference>
<dbReference type="EMBL" id="CP002688">
    <property type="protein sequence ID" value="ANM69837.1"/>
    <property type="molecule type" value="Genomic_DNA"/>
</dbReference>
<dbReference type="PIR" id="T52068">
    <property type="entry name" value="T52068"/>
</dbReference>
<dbReference type="RefSeq" id="NP_001318597.1">
    <property type="nucleotide sequence ID" value="NM_001343596.1"/>
</dbReference>
<dbReference type="RefSeq" id="NP_197433.1">
    <property type="nucleotide sequence ID" value="NM_121937.5"/>
</dbReference>
<dbReference type="SMR" id="Q9M651"/>
<dbReference type="BioGRID" id="17328">
    <property type="interactions" value="1"/>
</dbReference>
<dbReference type="FunCoup" id="Q9M651">
    <property type="interactions" value="1321"/>
</dbReference>
<dbReference type="IntAct" id="Q9M651">
    <property type="interactions" value="3"/>
</dbReference>
<dbReference type="STRING" id="3702.Q9M651"/>
<dbReference type="iPTMnet" id="Q9M651"/>
<dbReference type="PaxDb" id="3702-AT5G19320.1"/>
<dbReference type="ProteomicsDB" id="236343"/>
<dbReference type="EnsemblPlants" id="AT5G19320.1">
    <property type="protein sequence ID" value="AT5G19320.1"/>
    <property type="gene ID" value="AT5G19320"/>
</dbReference>
<dbReference type="EnsemblPlants" id="AT5G19320.2">
    <property type="protein sequence ID" value="AT5G19320.2"/>
    <property type="gene ID" value="AT5G19320"/>
</dbReference>
<dbReference type="GeneID" id="832052"/>
<dbReference type="Gramene" id="AT5G19320.1">
    <property type="protein sequence ID" value="AT5G19320.1"/>
    <property type="gene ID" value="AT5G19320"/>
</dbReference>
<dbReference type="Gramene" id="AT5G19320.2">
    <property type="protein sequence ID" value="AT5G19320.2"/>
    <property type="gene ID" value="AT5G19320"/>
</dbReference>
<dbReference type="KEGG" id="ath:AT5G19320"/>
<dbReference type="Araport" id="AT5G19320"/>
<dbReference type="TAIR" id="AT5G19320">
    <property type="gene designation" value="RANGAP2"/>
</dbReference>
<dbReference type="eggNOG" id="KOG1909">
    <property type="taxonomic scope" value="Eukaryota"/>
</dbReference>
<dbReference type="HOGENOM" id="CLU_020837_0_0_1"/>
<dbReference type="InParanoid" id="Q9M651"/>
<dbReference type="OMA" id="ALEHCTH"/>
<dbReference type="PhylomeDB" id="Q9M651"/>
<dbReference type="CD-CODE" id="4299E36E">
    <property type="entry name" value="Nucleolus"/>
</dbReference>
<dbReference type="PRO" id="PR:Q9M651"/>
<dbReference type="Proteomes" id="UP000006548">
    <property type="component" value="Chromosome 5"/>
</dbReference>
<dbReference type="ExpressionAtlas" id="Q9M651">
    <property type="expression patterns" value="baseline and differential"/>
</dbReference>
<dbReference type="GO" id="GO:0005783">
    <property type="term" value="C:endoplasmic reticulum"/>
    <property type="evidence" value="ECO:0007005"/>
    <property type="project" value="TAIR"/>
</dbReference>
<dbReference type="GO" id="GO:0005635">
    <property type="term" value="C:nuclear envelope"/>
    <property type="evidence" value="ECO:0000314"/>
    <property type="project" value="TAIR"/>
</dbReference>
<dbReference type="GO" id="GO:0031965">
    <property type="term" value="C:nuclear membrane"/>
    <property type="evidence" value="ECO:0007669"/>
    <property type="project" value="UniProtKB-SubCell"/>
</dbReference>
<dbReference type="GO" id="GO:0009524">
    <property type="term" value="C:phragmoplast"/>
    <property type="evidence" value="ECO:0007669"/>
    <property type="project" value="UniProtKB-SubCell"/>
</dbReference>
<dbReference type="GO" id="GO:0000325">
    <property type="term" value="C:plant-type vacuole"/>
    <property type="evidence" value="ECO:0007005"/>
    <property type="project" value="TAIR"/>
</dbReference>
<dbReference type="GO" id="GO:0009536">
    <property type="term" value="C:plastid"/>
    <property type="evidence" value="ECO:0007005"/>
    <property type="project" value="TAIR"/>
</dbReference>
<dbReference type="GO" id="GO:0005819">
    <property type="term" value="C:spindle"/>
    <property type="evidence" value="ECO:0007669"/>
    <property type="project" value="UniProtKB-SubCell"/>
</dbReference>
<dbReference type="GO" id="GO:0005096">
    <property type="term" value="F:GTPase activator activity"/>
    <property type="evidence" value="ECO:0007669"/>
    <property type="project" value="UniProtKB-KW"/>
</dbReference>
<dbReference type="GO" id="GO:0006913">
    <property type="term" value="P:nucleocytoplasmic transport"/>
    <property type="evidence" value="ECO:0000304"/>
    <property type="project" value="TAIR"/>
</dbReference>
<dbReference type="FunFam" id="3.80.10.10:FF:000883">
    <property type="entry name" value="RAN GTPase-activating protein 2"/>
    <property type="match status" value="1"/>
</dbReference>
<dbReference type="FunFam" id="3.80.10.10:FF:001910">
    <property type="entry name" value="RANGAP2"/>
    <property type="match status" value="1"/>
</dbReference>
<dbReference type="FunFam" id="1.10.246.200:FF:000001">
    <property type="entry name" value="WPP domain-containing protein 2"/>
    <property type="match status" value="1"/>
</dbReference>
<dbReference type="Gene3D" id="3.80.10.10">
    <property type="entry name" value="Ribonuclease Inhibitor"/>
    <property type="match status" value="2"/>
</dbReference>
<dbReference type="Gene3D" id="1.10.246.200">
    <property type="entry name" value="WPP domain"/>
    <property type="match status" value="1"/>
</dbReference>
<dbReference type="InterPro" id="IPR001611">
    <property type="entry name" value="Leu-rich_rpt"/>
</dbReference>
<dbReference type="InterPro" id="IPR032675">
    <property type="entry name" value="LRR_dom_sf"/>
</dbReference>
<dbReference type="InterPro" id="IPR045203">
    <property type="entry name" value="RanGAP1/2"/>
</dbReference>
<dbReference type="InterPro" id="IPR025265">
    <property type="entry name" value="WPP_dom"/>
</dbReference>
<dbReference type="InterPro" id="IPR038214">
    <property type="entry name" value="WPP_sf"/>
</dbReference>
<dbReference type="PANTHER" id="PTHR46761">
    <property type="entry name" value="RAN GTPASE-ACTIVATING PROTEIN 1"/>
    <property type="match status" value="1"/>
</dbReference>
<dbReference type="PANTHER" id="PTHR46761:SF5">
    <property type="entry name" value="RAN GTPASE-ACTIVATING PROTEIN 2"/>
    <property type="match status" value="1"/>
</dbReference>
<dbReference type="Pfam" id="PF13516">
    <property type="entry name" value="LRR_6"/>
    <property type="match status" value="5"/>
</dbReference>
<dbReference type="Pfam" id="PF13943">
    <property type="entry name" value="WPP"/>
    <property type="match status" value="1"/>
</dbReference>
<dbReference type="SMART" id="SM00368">
    <property type="entry name" value="LRR_RI"/>
    <property type="match status" value="10"/>
</dbReference>
<dbReference type="SUPFAM" id="SSF52047">
    <property type="entry name" value="RNI-like"/>
    <property type="match status" value="1"/>
</dbReference>
<protein>
    <recommendedName>
        <fullName>RAN GTPase-activating protein 2</fullName>
        <shortName>AtRanGAP2</shortName>
        <shortName>RanGAP2</shortName>
    </recommendedName>
</protein>
<reference key="1">
    <citation type="journal article" date="2002" name="Plant J.">
        <title>Plant RanGAPs are localized at the nuclear envelope in interphase and associated with microtubules in mitotic cells.</title>
        <authorList>
            <person name="Pay A."/>
            <person name="Resch K."/>
            <person name="Frohnmeyer H."/>
            <person name="Fejes E."/>
            <person name="Nagy F."/>
            <person name="Nick P."/>
        </authorList>
    </citation>
    <scope>NUCLEOTIDE SEQUENCE [MRNA]</scope>
    <scope>FUNCTION</scope>
    <scope>SUBCELLULAR LOCATION</scope>
    <source>
        <strain>cv. Columbia</strain>
    </source>
</reference>
<reference key="2">
    <citation type="journal article" date="2000" name="Nature">
        <title>Sequence and analysis of chromosome 5 of the plant Arabidopsis thaliana.</title>
        <authorList>
            <person name="Tabata S."/>
            <person name="Kaneko T."/>
            <person name="Nakamura Y."/>
            <person name="Kotani H."/>
            <person name="Kato T."/>
            <person name="Asamizu E."/>
            <person name="Miyajima N."/>
            <person name="Sasamoto S."/>
            <person name="Kimura T."/>
            <person name="Hosouchi T."/>
            <person name="Kawashima K."/>
            <person name="Kohara M."/>
            <person name="Matsumoto M."/>
            <person name="Matsuno A."/>
            <person name="Muraki A."/>
            <person name="Nakayama S."/>
            <person name="Nakazaki N."/>
            <person name="Naruo K."/>
            <person name="Okumura S."/>
            <person name="Shinpo S."/>
            <person name="Takeuchi C."/>
            <person name="Wada T."/>
            <person name="Watanabe A."/>
            <person name="Yamada M."/>
            <person name="Yasuda M."/>
            <person name="Sato S."/>
            <person name="de la Bastide M."/>
            <person name="Huang E."/>
            <person name="Spiegel L."/>
            <person name="Gnoj L."/>
            <person name="O'Shaughnessy A."/>
            <person name="Preston R."/>
            <person name="Habermann K."/>
            <person name="Murray J."/>
            <person name="Johnson D."/>
            <person name="Rohlfing T."/>
            <person name="Nelson J."/>
            <person name="Stoneking T."/>
            <person name="Pepin K."/>
            <person name="Spieth J."/>
            <person name="Sekhon M."/>
            <person name="Armstrong J."/>
            <person name="Becker M."/>
            <person name="Belter E."/>
            <person name="Cordum H."/>
            <person name="Cordes M."/>
            <person name="Courtney L."/>
            <person name="Courtney W."/>
            <person name="Dante M."/>
            <person name="Du H."/>
            <person name="Edwards J."/>
            <person name="Fryman J."/>
            <person name="Haakensen B."/>
            <person name="Lamar E."/>
            <person name="Latreille P."/>
            <person name="Leonard S."/>
            <person name="Meyer R."/>
            <person name="Mulvaney E."/>
            <person name="Ozersky P."/>
            <person name="Riley A."/>
            <person name="Strowmatt C."/>
            <person name="Wagner-McPherson C."/>
            <person name="Wollam A."/>
            <person name="Yoakum M."/>
            <person name="Bell M."/>
            <person name="Dedhia N."/>
            <person name="Parnell L."/>
            <person name="Shah R."/>
            <person name="Rodriguez M."/>
            <person name="Hoon See L."/>
            <person name="Vil D."/>
            <person name="Baker J."/>
            <person name="Kirchoff K."/>
            <person name="Toth K."/>
            <person name="King L."/>
            <person name="Bahret A."/>
            <person name="Miller B."/>
            <person name="Marra M.A."/>
            <person name="Martienssen R."/>
            <person name="McCombie W.R."/>
            <person name="Wilson R.K."/>
            <person name="Murphy G."/>
            <person name="Bancroft I."/>
            <person name="Volckaert G."/>
            <person name="Wambutt R."/>
            <person name="Duesterhoeft A."/>
            <person name="Stiekema W."/>
            <person name="Pohl T."/>
            <person name="Entian K.-D."/>
            <person name="Terryn N."/>
            <person name="Hartley N."/>
            <person name="Bent E."/>
            <person name="Johnson S."/>
            <person name="Langham S.-A."/>
            <person name="McCullagh B."/>
            <person name="Robben J."/>
            <person name="Grymonprez B."/>
            <person name="Zimmermann W."/>
            <person name="Ramsperger U."/>
            <person name="Wedler H."/>
            <person name="Balke K."/>
            <person name="Wedler E."/>
            <person name="Peters S."/>
            <person name="van Staveren M."/>
            <person name="Dirkse W."/>
            <person name="Mooijman P."/>
            <person name="Klein Lankhorst R."/>
            <person name="Weitzenegger T."/>
            <person name="Bothe G."/>
            <person name="Rose M."/>
            <person name="Hauf J."/>
            <person name="Berneiser S."/>
            <person name="Hempel S."/>
            <person name="Feldpausch M."/>
            <person name="Lamberth S."/>
            <person name="Villarroel R."/>
            <person name="Gielen J."/>
            <person name="Ardiles W."/>
            <person name="Bents O."/>
            <person name="Lemcke K."/>
            <person name="Kolesov G."/>
            <person name="Mayer K.F.X."/>
            <person name="Rudd S."/>
            <person name="Schoof H."/>
            <person name="Schueller C."/>
            <person name="Zaccaria P."/>
            <person name="Mewes H.-W."/>
            <person name="Bevan M."/>
            <person name="Fransz P.F."/>
        </authorList>
    </citation>
    <scope>NUCLEOTIDE SEQUENCE [LARGE SCALE GENOMIC DNA]</scope>
    <source>
        <strain>cv. Columbia</strain>
    </source>
</reference>
<reference key="3">
    <citation type="journal article" date="2017" name="Plant J.">
        <title>Araport11: a complete reannotation of the Arabidopsis thaliana reference genome.</title>
        <authorList>
            <person name="Cheng C.Y."/>
            <person name="Krishnakumar V."/>
            <person name="Chan A.P."/>
            <person name="Thibaud-Nissen F."/>
            <person name="Schobel S."/>
            <person name="Town C.D."/>
        </authorList>
    </citation>
    <scope>GENOME REANNOTATION</scope>
    <source>
        <strain>cv. Columbia</strain>
    </source>
</reference>
<reference key="4">
    <citation type="journal article" date="2007" name="Curr. Biol.">
        <title>Anchorage of plant RanGAP to the nuclear envelope involves novel nuclear-pore-associated proteins.</title>
        <authorList>
            <person name="Xu X.M."/>
            <person name="Meulia T."/>
            <person name="Meier I."/>
        </authorList>
    </citation>
    <scope>INTERACTION WITH WIP1 AND WIP2</scope>
</reference>
<reference key="5">
    <citation type="journal article" date="2008" name="Plant Cell">
        <title>Two distinct interacting classes of nuclear envelope-associated coiled-coil proteins are required for the tissue-specific nuclear envelope targeting of Arabidopsis RanGAP.</title>
        <authorList>
            <person name="Zhao Q."/>
            <person name="Brkljacic J."/>
            <person name="Meier I."/>
        </authorList>
    </citation>
    <scope>INTERACTION WITH WIT1</scope>
</reference>
<reference key="6">
    <citation type="journal article" date="2009" name="J. Proteomics">
        <title>Phosphoproteomic analysis of nuclei-enriched fractions from Arabidopsis thaliana.</title>
        <authorList>
            <person name="Jones A.M.E."/>
            <person name="MacLean D."/>
            <person name="Studholme D.J."/>
            <person name="Serna-Sanz A."/>
            <person name="Andreasson E."/>
            <person name="Rathjen J.P."/>
            <person name="Peck S.C."/>
        </authorList>
    </citation>
    <scope>SUBCELLULAR LOCATION</scope>
    <scope>IDENTIFICATION BY MASS SPECTROMETRY [LARGE SCALE ANALYSIS]</scope>
    <source>
        <strain>cv. Columbia</strain>
    </source>
</reference>
<proteinExistence type="evidence at protein level"/>
<comment type="function">
    <text evidence="3">GTPase activator for the nuclear Ras-related regulatory protein Ran, converting it to the putatively inactive GDP-bound state.</text>
</comment>
<comment type="subunit">
    <text evidence="1 4 5">Homodimer (By similarity). Interacts with WIP1 and WIP2 through its WPP domain. Component of Ran complexes at least composed of WIT1 or WIT2, RANGAP1 or RANGAP2, and WIP1 or WIP2 or WIP3. Interacts with WIT1.</text>
</comment>
<comment type="subcellular location">
    <subcellularLocation>
        <location>Cytoplasm</location>
    </subcellularLocation>
    <subcellularLocation>
        <location>Nucleus membrane</location>
        <topology>Peripheral membrane protein</topology>
        <orientation>Cytoplasmic side</orientation>
    </subcellularLocation>
    <subcellularLocation>
        <location>Cytoplasm</location>
        <location>Cytoskeleton</location>
        <location>Spindle</location>
    </subcellularLocation>
    <subcellularLocation>
        <location>Cytoplasm</location>
        <location>Cytoskeleton</location>
        <location>Phragmoplast</location>
    </subcellularLocation>
    <text>Localized in patchy areas at the nuclear envelope of interphase cells. During mitosis, associates with mitotic spindles at the anaphase. Associated to the microtubular phragmoplast and the surface of the daughter nuclei at the telophase.</text>
</comment>
<comment type="domain">
    <text evidence="1">The WPP domain is required for the nuclear envelope localization.</text>
</comment>
<comment type="similarity">
    <text evidence="6">Belongs to the RNA1 family.</text>
</comment>
<feature type="chain" id="PRO_0000347215" description="RAN GTPase-activating protein 2">
    <location>
        <begin position="1"/>
        <end position="545"/>
    </location>
</feature>
<feature type="repeat" description="LRR 1">
    <location>
        <begin position="213"/>
        <end position="236"/>
    </location>
</feature>
<feature type="repeat" description="LRR 2">
    <location>
        <begin position="241"/>
        <end position="264"/>
    </location>
</feature>
<feature type="repeat" description="LRR 3">
    <location>
        <begin position="269"/>
        <end position="296"/>
    </location>
</feature>
<feature type="repeat" description="LRR 4">
    <location>
        <begin position="325"/>
        <end position="348"/>
    </location>
</feature>
<feature type="repeat" description="LRR 5">
    <location>
        <begin position="353"/>
        <end position="380"/>
    </location>
</feature>
<feature type="repeat" description="LRR 6">
    <location>
        <begin position="382"/>
        <end position="405"/>
    </location>
</feature>
<feature type="repeat" description="LRR 7">
    <location>
        <begin position="410"/>
        <end position="433"/>
    </location>
</feature>
<feature type="repeat" description="LRR 8">
    <location>
        <begin position="439"/>
        <end position="462"/>
    </location>
</feature>
<feature type="repeat" description="LRR 9">
    <location>
        <begin position="467"/>
        <end position="494"/>
    </location>
</feature>
<feature type="region of interest" description="WPP">
    <location>
        <begin position="1"/>
        <end position="116"/>
    </location>
</feature>
<feature type="region of interest" description="Disordered" evidence="2">
    <location>
        <begin position="496"/>
        <end position="545"/>
    </location>
</feature>
<feature type="compositionally biased region" description="Acidic residues" evidence="2">
    <location>
        <begin position="503"/>
        <end position="525"/>
    </location>
</feature>
<feature type="sequence conflict" description="In Ref. 1; AAF25948." evidence="6" ref="1">
    <original>GH</original>
    <variation>VN</variation>
    <location>
        <begin position="438"/>
        <end position="439"/>
    </location>
</feature>
<keyword id="KW-0963">Cytoplasm</keyword>
<keyword id="KW-0206">Cytoskeleton</keyword>
<keyword id="KW-0343">GTPase activation</keyword>
<keyword id="KW-0433">Leucine-rich repeat</keyword>
<keyword id="KW-0472">Membrane</keyword>
<keyword id="KW-0539">Nucleus</keyword>
<keyword id="KW-1185">Reference proteome</keyword>
<keyword id="KW-0677">Repeat</keyword>
<accession>Q9M651</accession>
<evidence type="ECO:0000250" key="1"/>
<evidence type="ECO:0000256" key="2">
    <source>
        <dbReference type="SAM" id="MobiDB-lite"/>
    </source>
</evidence>
<evidence type="ECO:0000269" key="3">
    <source>
    </source>
</evidence>
<evidence type="ECO:0000269" key="4">
    <source>
    </source>
</evidence>
<evidence type="ECO:0000269" key="5">
    <source>
    </source>
</evidence>
<evidence type="ECO:0000305" key="6"/>
<organism>
    <name type="scientific">Arabidopsis thaliana</name>
    <name type="common">Mouse-ear cress</name>
    <dbReference type="NCBI Taxonomy" id="3702"/>
    <lineage>
        <taxon>Eukaryota</taxon>
        <taxon>Viridiplantae</taxon>
        <taxon>Streptophyta</taxon>
        <taxon>Embryophyta</taxon>
        <taxon>Tracheophyta</taxon>
        <taxon>Spermatophyta</taxon>
        <taxon>Magnoliopsida</taxon>
        <taxon>eudicotyledons</taxon>
        <taxon>Gunneridae</taxon>
        <taxon>Pentapetalae</taxon>
        <taxon>rosids</taxon>
        <taxon>malvids</taxon>
        <taxon>Brassicales</taxon>
        <taxon>Brassicaceae</taxon>
        <taxon>Camelineae</taxon>
        <taxon>Arabidopsis</taxon>
    </lineage>
</organism>
<gene>
    <name type="primary">RANGAP2</name>
    <name type="ordered locus">At5g19320</name>
    <name type="ORF">F7K24.70</name>
</gene>
<sequence length="545" mass="59652">MADILDSRPHAFSIKLWPPSLPTRKALIERITNNFSSKTIFTEKYGSLTKDQATENAKRIEDIAFSTANQQFEREPDGDGGSAVQLYAKECSKLILEVLKKGPVAKVAARELISEDSVSPRETFFDISKGKRAFIEAEEAEELLKPLKEPGNAYTKICFSNRSFGLGAARVAEPILASLKDQLKEVDLSDFVAGRPELEALEVMNIFSDALQGSILSSLNLSDNALGEKGVRAFGALLKSLSSLEELYLMNDGISKEAAQAVSELIPSTENLRVLHFHNNMTGDEGALAIAEVVKRSPLLENFRCSSTRVGSKGGIALSEALEHCTHMEKLDLRDNMFGTEAGVSLSKTLSSFKHMTELYLSYLNLEDEGAIAIVNALKESASPIEVLEMAGNDITVEAASAIAACVAAKQDLNKLNLSENELKDEGCVQIANCIEEGHSKLQYIDMSTNYIRRAGARALAHVVVKKEAFKLLNIDGNIISEEGIEELKEIFKKSPELLGALDENDPDGEEDDDDEEDEEDEENEGNGNGELESKLKNLEVNQED</sequence>